<sequence length="144" mass="16094">MIKLESLQDPSPRKRRTKLLGRGPSSGHGKTSCRGHKGDGSRSGYKRRFGYEGGGVPLYRRVPTRGFSHARFDKCVEEITTQRLNALFSEGEEITLEALKQKKAIDKRAIRVKVIVKGDLEKTFIWKDANVVLSQGVRNLIGVA</sequence>
<organism>
    <name type="scientific">Chlamydia abortus (strain DSM 27085 / S26/3)</name>
    <name type="common">Chlamydophila abortus</name>
    <dbReference type="NCBI Taxonomy" id="218497"/>
    <lineage>
        <taxon>Bacteria</taxon>
        <taxon>Pseudomonadati</taxon>
        <taxon>Chlamydiota</taxon>
        <taxon>Chlamydiia</taxon>
        <taxon>Chlamydiales</taxon>
        <taxon>Chlamydiaceae</taxon>
        <taxon>Chlamydia/Chlamydophila group</taxon>
        <taxon>Chlamydia</taxon>
    </lineage>
</organism>
<keyword id="KW-0687">Ribonucleoprotein</keyword>
<keyword id="KW-0689">Ribosomal protein</keyword>
<keyword id="KW-0694">RNA-binding</keyword>
<keyword id="KW-0699">rRNA-binding</keyword>
<proteinExistence type="inferred from homology"/>
<comment type="function">
    <text evidence="1">Binds to the 23S rRNA.</text>
</comment>
<comment type="subunit">
    <text evidence="1">Part of the 50S ribosomal subunit.</text>
</comment>
<comment type="similarity">
    <text evidence="1">Belongs to the universal ribosomal protein uL15 family.</text>
</comment>
<protein>
    <recommendedName>
        <fullName evidence="1">Large ribosomal subunit protein uL15</fullName>
    </recommendedName>
    <alternativeName>
        <fullName evidence="3">50S ribosomal protein L15</fullName>
    </alternativeName>
</protein>
<accession>Q5L703</accession>
<dbReference type="EMBL" id="CR848038">
    <property type="protein sequence ID" value="CAH63567.1"/>
    <property type="molecule type" value="Genomic_DNA"/>
</dbReference>
<dbReference type="RefSeq" id="WP_011096833.1">
    <property type="nucleotide sequence ID" value="NC_004552.2"/>
</dbReference>
<dbReference type="SMR" id="Q5L703"/>
<dbReference type="KEGG" id="cab:CAB109"/>
<dbReference type="eggNOG" id="COG0200">
    <property type="taxonomic scope" value="Bacteria"/>
</dbReference>
<dbReference type="HOGENOM" id="CLU_055188_4_2_0"/>
<dbReference type="OrthoDB" id="9810293at2"/>
<dbReference type="Proteomes" id="UP000001012">
    <property type="component" value="Chromosome"/>
</dbReference>
<dbReference type="GO" id="GO:0022625">
    <property type="term" value="C:cytosolic large ribosomal subunit"/>
    <property type="evidence" value="ECO:0007669"/>
    <property type="project" value="TreeGrafter"/>
</dbReference>
<dbReference type="GO" id="GO:0019843">
    <property type="term" value="F:rRNA binding"/>
    <property type="evidence" value="ECO:0007669"/>
    <property type="project" value="UniProtKB-UniRule"/>
</dbReference>
<dbReference type="GO" id="GO:0003735">
    <property type="term" value="F:structural constituent of ribosome"/>
    <property type="evidence" value="ECO:0007669"/>
    <property type="project" value="InterPro"/>
</dbReference>
<dbReference type="GO" id="GO:0006412">
    <property type="term" value="P:translation"/>
    <property type="evidence" value="ECO:0007669"/>
    <property type="project" value="UniProtKB-UniRule"/>
</dbReference>
<dbReference type="Gene3D" id="3.100.10.10">
    <property type="match status" value="1"/>
</dbReference>
<dbReference type="HAMAP" id="MF_01341">
    <property type="entry name" value="Ribosomal_uL15"/>
    <property type="match status" value="1"/>
</dbReference>
<dbReference type="InterPro" id="IPR030878">
    <property type="entry name" value="Ribosomal_uL15"/>
</dbReference>
<dbReference type="InterPro" id="IPR036227">
    <property type="entry name" value="Ribosomal_uL15/eL18_sf"/>
</dbReference>
<dbReference type="InterPro" id="IPR005749">
    <property type="entry name" value="Ribosomal_uL15_bac-type"/>
</dbReference>
<dbReference type="NCBIfam" id="TIGR01071">
    <property type="entry name" value="rplO_bact"/>
    <property type="match status" value="1"/>
</dbReference>
<dbReference type="PANTHER" id="PTHR12934">
    <property type="entry name" value="50S RIBOSOMAL PROTEIN L15"/>
    <property type="match status" value="1"/>
</dbReference>
<dbReference type="PANTHER" id="PTHR12934:SF11">
    <property type="entry name" value="LARGE RIBOSOMAL SUBUNIT PROTEIN UL15M"/>
    <property type="match status" value="1"/>
</dbReference>
<dbReference type="SUPFAM" id="SSF52080">
    <property type="entry name" value="Ribosomal proteins L15p and L18e"/>
    <property type="match status" value="1"/>
</dbReference>
<reference key="1">
    <citation type="journal article" date="2005" name="Genome Res.">
        <title>The Chlamydophila abortus genome sequence reveals an array of variable proteins that contribute to interspecies variation.</title>
        <authorList>
            <person name="Thomson N.R."/>
            <person name="Yeats C."/>
            <person name="Bell K."/>
            <person name="Holden M.T.G."/>
            <person name="Bentley S.D."/>
            <person name="Livingstone M."/>
            <person name="Cerdeno-Tarraga A.-M."/>
            <person name="Harris B."/>
            <person name="Doggett J."/>
            <person name="Ormond D."/>
            <person name="Mungall K."/>
            <person name="Clarke K."/>
            <person name="Feltwell T."/>
            <person name="Hance Z."/>
            <person name="Sanders M."/>
            <person name="Quail M.A."/>
            <person name="Price C."/>
            <person name="Barrell B.G."/>
            <person name="Parkhill J."/>
            <person name="Longbottom D."/>
        </authorList>
    </citation>
    <scope>NUCLEOTIDE SEQUENCE [LARGE SCALE GENOMIC DNA]</scope>
    <source>
        <strain>DSM 27085 / S26/3</strain>
    </source>
</reference>
<gene>
    <name evidence="1" type="primary">rplO</name>
    <name type="ordered locus">CAB109</name>
</gene>
<feature type="chain" id="PRO_0000251500" description="Large ribosomal subunit protein uL15">
    <location>
        <begin position="1"/>
        <end position="144"/>
    </location>
</feature>
<feature type="region of interest" description="Disordered" evidence="2">
    <location>
        <begin position="1"/>
        <end position="48"/>
    </location>
</feature>
<name>RL15_CHLAB</name>
<evidence type="ECO:0000255" key="1">
    <source>
        <dbReference type="HAMAP-Rule" id="MF_01341"/>
    </source>
</evidence>
<evidence type="ECO:0000256" key="2">
    <source>
        <dbReference type="SAM" id="MobiDB-lite"/>
    </source>
</evidence>
<evidence type="ECO:0000305" key="3"/>